<name>PEPT_SHOC1</name>
<accession>Q5WK52</accession>
<gene>
    <name evidence="1" type="primary">pepT</name>
    <name type="ordered locus">ABC0714</name>
</gene>
<feature type="chain" id="PRO_0000185281" description="Peptidase T">
    <location>
        <begin position="1"/>
        <end position="408"/>
    </location>
</feature>
<feature type="active site" evidence="1">
    <location>
        <position position="81"/>
    </location>
</feature>
<feature type="active site" description="Proton acceptor" evidence="1">
    <location>
        <position position="173"/>
    </location>
</feature>
<feature type="binding site" evidence="1">
    <location>
        <position position="79"/>
    </location>
    <ligand>
        <name>Zn(2+)</name>
        <dbReference type="ChEBI" id="CHEBI:29105"/>
        <label>1</label>
    </ligand>
</feature>
<feature type="binding site" evidence="1">
    <location>
        <position position="139"/>
    </location>
    <ligand>
        <name>Zn(2+)</name>
        <dbReference type="ChEBI" id="CHEBI:29105"/>
        <label>1</label>
    </ligand>
</feature>
<feature type="binding site" evidence="1">
    <location>
        <position position="139"/>
    </location>
    <ligand>
        <name>Zn(2+)</name>
        <dbReference type="ChEBI" id="CHEBI:29105"/>
        <label>2</label>
    </ligand>
</feature>
<feature type="binding site" evidence="1">
    <location>
        <position position="174"/>
    </location>
    <ligand>
        <name>Zn(2+)</name>
        <dbReference type="ChEBI" id="CHEBI:29105"/>
        <label>2</label>
    </ligand>
</feature>
<feature type="binding site" evidence="1">
    <location>
        <position position="196"/>
    </location>
    <ligand>
        <name>Zn(2+)</name>
        <dbReference type="ChEBI" id="CHEBI:29105"/>
        <label>1</label>
    </ligand>
</feature>
<feature type="binding site" evidence="1">
    <location>
        <position position="378"/>
    </location>
    <ligand>
        <name>Zn(2+)</name>
        <dbReference type="ChEBI" id="CHEBI:29105"/>
        <label>2</label>
    </ligand>
</feature>
<evidence type="ECO:0000255" key="1">
    <source>
        <dbReference type="HAMAP-Rule" id="MF_00550"/>
    </source>
</evidence>
<organism>
    <name type="scientific">Shouchella clausii (strain KSM-K16)</name>
    <name type="common">Alkalihalobacillus clausii</name>
    <dbReference type="NCBI Taxonomy" id="66692"/>
    <lineage>
        <taxon>Bacteria</taxon>
        <taxon>Bacillati</taxon>
        <taxon>Bacillota</taxon>
        <taxon>Bacilli</taxon>
        <taxon>Bacillales</taxon>
        <taxon>Bacillaceae</taxon>
        <taxon>Shouchella</taxon>
    </lineage>
</organism>
<reference key="1">
    <citation type="submission" date="2003-10" db="EMBL/GenBank/DDBJ databases">
        <title>The complete genome sequence of the alkaliphilic Bacillus clausii KSM-K16.</title>
        <authorList>
            <person name="Takaki Y."/>
            <person name="Kageyama Y."/>
            <person name="Shimamura S."/>
            <person name="Suzuki H."/>
            <person name="Nishi S."/>
            <person name="Hatada Y."/>
            <person name="Kawai S."/>
            <person name="Ito S."/>
            <person name="Horikoshi K."/>
        </authorList>
    </citation>
    <scope>NUCLEOTIDE SEQUENCE [LARGE SCALE GENOMIC DNA]</scope>
    <source>
        <strain>KSM-K16</strain>
    </source>
</reference>
<keyword id="KW-0031">Aminopeptidase</keyword>
<keyword id="KW-0963">Cytoplasm</keyword>
<keyword id="KW-0378">Hydrolase</keyword>
<keyword id="KW-0479">Metal-binding</keyword>
<keyword id="KW-0482">Metalloprotease</keyword>
<keyword id="KW-0645">Protease</keyword>
<keyword id="KW-1185">Reference proteome</keyword>
<keyword id="KW-0862">Zinc</keyword>
<proteinExistence type="inferred from homology"/>
<sequence length="408" mass="45207">MKQEIIDRFTRYAKVDTQSTEASNTVPTTEGQLELGRILVEELKALGLTEVTMDDNGYVMATLESNTNKEVPTIGFLAHLDTATEFTGKNVNPQVHEYNGGDIELGHGYVLSPKQFPELAGYEGHTLITTDGTTLLGADDKAGIAEIMTAMDYLIKHPEIEHGKIRVAFTPDEEIGRGPAHFDVDAFGAAFAYTLDGGPLGQFQYESFNAAAAKVSFYGVSTHPGTAKNKMVNAIKRAIEFHSQLPANEAPEFTEGYEGFYHLLSMEGNADFAELHYIIRDFDRQQFANRKAKMEAIAWEMQEKHGKGKVSIELRDQYYNMREKIEPQKEIVEVALEAMEKLGIDPKVGPIRGGTDGSQLSYKGLPTPNIFTGGENYHGRYEYVSVDNMEKAVHVIVNIANLVAQRAK</sequence>
<dbReference type="EC" id="3.4.11.4" evidence="1"/>
<dbReference type="EMBL" id="AP006627">
    <property type="protein sequence ID" value="BAD63253.1"/>
    <property type="molecule type" value="Genomic_DNA"/>
</dbReference>
<dbReference type="RefSeq" id="WP_011245569.1">
    <property type="nucleotide sequence ID" value="NC_006582.1"/>
</dbReference>
<dbReference type="SMR" id="Q5WK52"/>
<dbReference type="STRING" id="66692.ABC0714"/>
<dbReference type="MEROPS" id="M20.003"/>
<dbReference type="KEGG" id="bcl:ABC0714"/>
<dbReference type="eggNOG" id="COG2195">
    <property type="taxonomic scope" value="Bacteria"/>
</dbReference>
<dbReference type="HOGENOM" id="CLU_053676_0_0_9"/>
<dbReference type="OrthoDB" id="9804934at2"/>
<dbReference type="Proteomes" id="UP000001168">
    <property type="component" value="Chromosome"/>
</dbReference>
<dbReference type="GO" id="GO:0005829">
    <property type="term" value="C:cytosol"/>
    <property type="evidence" value="ECO:0007669"/>
    <property type="project" value="TreeGrafter"/>
</dbReference>
<dbReference type="GO" id="GO:0008237">
    <property type="term" value="F:metallopeptidase activity"/>
    <property type="evidence" value="ECO:0007669"/>
    <property type="project" value="UniProtKB-KW"/>
</dbReference>
<dbReference type="GO" id="GO:0045148">
    <property type="term" value="F:tripeptide aminopeptidase activity"/>
    <property type="evidence" value="ECO:0007669"/>
    <property type="project" value="UniProtKB-UniRule"/>
</dbReference>
<dbReference type="GO" id="GO:0008270">
    <property type="term" value="F:zinc ion binding"/>
    <property type="evidence" value="ECO:0007669"/>
    <property type="project" value="UniProtKB-UniRule"/>
</dbReference>
<dbReference type="GO" id="GO:0043171">
    <property type="term" value="P:peptide catabolic process"/>
    <property type="evidence" value="ECO:0007669"/>
    <property type="project" value="UniProtKB-UniRule"/>
</dbReference>
<dbReference type="GO" id="GO:0006508">
    <property type="term" value="P:proteolysis"/>
    <property type="evidence" value="ECO:0007669"/>
    <property type="project" value="UniProtKB-UniRule"/>
</dbReference>
<dbReference type="CDD" id="cd03892">
    <property type="entry name" value="M20_peptT"/>
    <property type="match status" value="1"/>
</dbReference>
<dbReference type="FunFam" id="3.30.70.360:FF:000002">
    <property type="entry name" value="Peptidase T"/>
    <property type="match status" value="1"/>
</dbReference>
<dbReference type="Gene3D" id="3.30.70.360">
    <property type="match status" value="1"/>
</dbReference>
<dbReference type="Gene3D" id="3.40.630.10">
    <property type="entry name" value="Zn peptidases"/>
    <property type="match status" value="1"/>
</dbReference>
<dbReference type="HAMAP" id="MF_00550">
    <property type="entry name" value="Aminopeptidase_M20"/>
    <property type="match status" value="1"/>
</dbReference>
<dbReference type="InterPro" id="IPR001261">
    <property type="entry name" value="ArgE/DapE_CS"/>
</dbReference>
<dbReference type="InterPro" id="IPR036264">
    <property type="entry name" value="Bact_exopeptidase_dim_dom"/>
</dbReference>
<dbReference type="InterPro" id="IPR002933">
    <property type="entry name" value="Peptidase_M20"/>
</dbReference>
<dbReference type="InterPro" id="IPR011650">
    <property type="entry name" value="Peptidase_M20_dimer"/>
</dbReference>
<dbReference type="InterPro" id="IPR010161">
    <property type="entry name" value="Peptidase_M20B"/>
</dbReference>
<dbReference type="NCBIfam" id="TIGR01882">
    <property type="entry name" value="peptidase-T"/>
    <property type="match status" value="1"/>
</dbReference>
<dbReference type="NCBIfam" id="NF003976">
    <property type="entry name" value="PRK05469.1"/>
    <property type="match status" value="1"/>
</dbReference>
<dbReference type="NCBIfam" id="NF009920">
    <property type="entry name" value="PRK13381.1"/>
    <property type="match status" value="1"/>
</dbReference>
<dbReference type="PANTHER" id="PTHR42994">
    <property type="entry name" value="PEPTIDASE T"/>
    <property type="match status" value="1"/>
</dbReference>
<dbReference type="PANTHER" id="PTHR42994:SF1">
    <property type="entry name" value="PEPTIDASE T"/>
    <property type="match status" value="1"/>
</dbReference>
<dbReference type="Pfam" id="PF07687">
    <property type="entry name" value="M20_dimer"/>
    <property type="match status" value="1"/>
</dbReference>
<dbReference type="Pfam" id="PF01546">
    <property type="entry name" value="Peptidase_M20"/>
    <property type="match status" value="1"/>
</dbReference>
<dbReference type="PIRSF" id="PIRSF037215">
    <property type="entry name" value="Peptidase_M20B"/>
    <property type="match status" value="1"/>
</dbReference>
<dbReference type="SUPFAM" id="SSF55031">
    <property type="entry name" value="Bacterial exopeptidase dimerisation domain"/>
    <property type="match status" value="1"/>
</dbReference>
<dbReference type="SUPFAM" id="SSF53187">
    <property type="entry name" value="Zn-dependent exopeptidases"/>
    <property type="match status" value="1"/>
</dbReference>
<dbReference type="PROSITE" id="PS00758">
    <property type="entry name" value="ARGE_DAPE_CPG2_1"/>
    <property type="match status" value="1"/>
</dbReference>
<dbReference type="PROSITE" id="PS00759">
    <property type="entry name" value="ARGE_DAPE_CPG2_2"/>
    <property type="match status" value="1"/>
</dbReference>
<comment type="function">
    <text evidence="1">Cleaves the N-terminal amino acid of tripeptides.</text>
</comment>
<comment type="catalytic activity">
    <reaction evidence="1">
        <text>Release of the N-terminal residue from a tripeptide.</text>
        <dbReference type="EC" id="3.4.11.4"/>
    </reaction>
</comment>
<comment type="cofactor">
    <cofactor evidence="1">
        <name>Zn(2+)</name>
        <dbReference type="ChEBI" id="CHEBI:29105"/>
    </cofactor>
    <text evidence="1">Binds 2 Zn(2+) ions per subunit.</text>
</comment>
<comment type="subcellular location">
    <subcellularLocation>
        <location evidence="1">Cytoplasm</location>
    </subcellularLocation>
</comment>
<comment type="similarity">
    <text evidence="1">Belongs to the peptidase M20B family.</text>
</comment>
<protein>
    <recommendedName>
        <fullName evidence="1">Peptidase T</fullName>
        <ecNumber evidence="1">3.4.11.4</ecNumber>
    </recommendedName>
    <alternativeName>
        <fullName evidence="1">Aminotripeptidase</fullName>
        <shortName evidence="1">Tripeptidase</shortName>
    </alternativeName>
    <alternativeName>
        <fullName evidence="1">Tripeptide aminopeptidase</fullName>
    </alternativeName>
</protein>